<feature type="chain" id="PRO_0000209632" description="Putative 4-hydroxy-4-methyl-2-oxoglutarate aldolase">
    <location>
        <begin position="1"/>
        <end position="162"/>
    </location>
</feature>
<feature type="binding site" evidence="1">
    <location>
        <begin position="75"/>
        <end position="78"/>
    </location>
    <ligand>
        <name>substrate</name>
    </ligand>
</feature>
<feature type="binding site" evidence="1">
    <location>
        <position position="97"/>
    </location>
    <ligand>
        <name>substrate</name>
    </ligand>
</feature>
<feature type="binding site" evidence="1">
    <location>
        <position position="98"/>
    </location>
    <ligand>
        <name>a divalent metal cation</name>
        <dbReference type="ChEBI" id="CHEBI:60240"/>
    </ligand>
</feature>
<gene>
    <name type="ordered locus">PSPTO_2294</name>
</gene>
<organism>
    <name type="scientific">Pseudomonas syringae pv. tomato (strain ATCC BAA-871 / DC3000)</name>
    <dbReference type="NCBI Taxonomy" id="223283"/>
    <lineage>
        <taxon>Bacteria</taxon>
        <taxon>Pseudomonadati</taxon>
        <taxon>Pseudomonadota</taxon>
        <taxon>Gammaproteobacteria</taxon>
        <taxon>Pseudomonadales</taxon>
        <taxon>Pseudomonadaceae</taxon>
        <taxon>Pseudomonas</taxon>
    </lineage>
</organism>
<dbReference type="EC" id="4.1.3.17"/>
<dbReference type="EC" id="4.1.1.112"/>
<dbReference type="EMBL" id="AE016853">
    <property type="protein sequence ID" value="AAO55808.1"/>
    <property type="molecule type" value="Genomic_DNA"/>
</dbReference>
<dbReference type="RefSeq" id="NP_792113.1">
    <property type="nucleotide sequence ID" value="NC_004578.1"/>
</dbReference>
<dbReference type="SMR" id="Q883Q6"/>
<dbReference type="STRING" id="223283.PSPTO_2294"/>
<dbReference type="GeneID" id="1183945"/>
<dbReference type="KEGG" id="pst:PSPTO_2294"/>
<dbReference type="PATRIC" id="fig|223283.9.peg.2330"/>
<dbReference type="eggNOG" id="COG0684">
    <property type="taxonomic scope" value="Bacteria"/>
</dbReference>
<dbReference type="HOGENOM" id="CLU_072626_4_0_6"/>
<dbReference type="OrthoDB" id="943692at2"/>
<dbReference type="PhylomeDB" id="Q883Q6"/>
<dbReference type="Proteomes" id="UP000002515">
    <property type="component" value="Chromosome"/>
</dbReference>
<dbReference type="GO" id="GO:0047443">
    <property type="term" value="F:4-hydroxy-4-methyl-2-oxoglutarate aldolase activity"/>
    <property type="evidence" value="ECO:0007669"/>
    <property type="project" value="UniProtKB-EC"/>
</dbReference>
<dbReference type="GO" id="GO:0046872">
    <property type="term" value="F:metal ion binding"/>
    <property type="evidence" value="ECO:0007669"/>
    <property type="project" value="UniProtKB-KW"/>
</dbReference>
<dbReference type="GO" id="GO:0008948">
    <property type="term" value="F:oxaloacetate decarboxylase activity"/>
    <property type="evidence" value="ECO:0007669"/>
    <property type="project" value="UniProtKB-EC"/>
</dbReference>
<dbReference type="GO" id="GO:0008428">
    <property type="term" value="F:ribonuclease inhibitor activity"/>
    <property type="evidence" value="ECO:0007669"/>
    <property type="project" value="InterPro"/>
</dbReference>
<dbReference type="GO" id="GO:0051252">
    <property type="term" value="P:regulation of RNA metabolic process"/>
    <property type="evidence" value="ECO:0007669"/>
    <property type="project" value="InterPro"/>
</dbReference>
<dbReference type="CDD" id="cd16841">
    <property type="entry name" value="RraA_family"/>
    <property type="match status" value="1"/>
</dbReference>
<dbReference type="Gene3D" id="3.50.30.40">
    <property type="entry name" value="Ribonuclease E inhibitor RraA/RraA-like"/>
    <property type="match status" value="1"/>
</dbReference>
<dbReference type="InterPro" id="IPR010203">
    <property type="entry name" value="RraA"/>
</dbReference>
<dbReference type="InterPro" id="IPR005493">
    <property type="entry name" value="RraA/RraA-like"/>
</dbReference>
<dbReference type="InterPro" id="IPR036704">
    <property type="entry name" value="RraA/RraA-like_sf"/>
</dbReference>
<dbReference type="NCBIfam" id="TIGR01935">
    <property type="entry name" value="NOT-MenG"/>
    <property type="match status" value="1"/>
</dbReference>
<dbReference type="NCBIfam" id="NF006875">
    <property type="entry name" value="PRK09372.1"/>
    <property type="match status" value="1"/>
</dbReference>
<dbReference type="NCBIfam" id="NF009134">
    <property type="entry name" value="PRK12487.1"/>
    <property type="match status" value="1"/>
</dbReference>
<dbReference type="PANTHER" id="PTHR33254">
    <property type="entry name" value="4-HYDROXY-4-METHYL-2-OXOGLUTARATE ALDOLASE 3-RELATED"/>
    <property type="match status" value="1"/>
</dbReference>
<dbReference type="PANTHER" id="PTHR33254:SF29">
    <property type="entry name" value="REGULATOR OF RIBONUCLEASE ACTIVITY A"/>
    <property type="match status" value="1"/>
</dbReference>
<dbReference type="Pfam" id="PF03737">
    <property type="entry name" value="RraA-like"/>
    <property type="match status" value="1"/>
</dbReference>
<dbReference type="SUPFAM" id="SSF89562">
    <property type="entry name" value="RraA-like"/>
    <property type="match status" value="1"/>
</dbReference>
<reference key="1">
    <citation type="journal article" date="2003" name="Proc. Natl. Acad. Sci. U.S.A.">
        <title>The complete genome sequence of the Arabidopsis and tomato pathogen Pseudomonas syringae pv. tomato DC3000.</title>
        <authorList>
            <person name="Buell C.R."/>
            <person name="Joardar V."/>
            <person name="Lindeberg M."/>
            <person name="Selengut J."/>
            <person name="Paulsen I.T."/>
            <person name="Gwinn M.L."/>
            <person name="Dodson R.J."/>
            <person name="DeBoy R.T."/>
            <person name="Durkin A.S."/>
            <person name="Kolonay J.F."/>
            <person name="Madupu R."/>
            <person name="Daugherty S.C."/>
            <person name="Brinkac L.M."/>
            <person name="Beanan M.J."/>
            <person name="Haft D.H."/>
            <person name="Nelson W.C."/>
            <person name="Davidsen T.M."/>
            <person name="Zafar N."/>
            <person name="Zhou L."/>
            <person name="Liu J."/>
            <person name="Yuan Q."/>
            <person name="Khouri H.M."/>
            <person name="Fedorova N.B."/>
            <person name="Tran B."/>
            <person name="Russell D."/>
            <person name="Berry K.J."/>
            <person name="Utterback T.R."/>
            <person name="Van Aken S.E."/>
            <person name="Feldblyum T.V."/>
            <person name="D'Ascenzo M."/>
            <person name="Deng W.-L."/>
            <person name="Ramos A.R."/>
            <person name="Alfano J.R."/>
            <person name="Cartinhour S."/>
            <person name="Chatterjee A.K."/>
            <person name="Delaney T.P."/>
            <person name="Lazarowitz S.G."/>
            <person name="Martin G.B."/>
            <person name="Schneider D.J."/>
            <person name="Tang X."/>
            <person name="Bender C.L."/>
            <person name="White O."/>
            <person name="Fraser C.M."/>
            <person name="Collmer A."/>
        </authorList>
    </citation>
    <scope>NUCLEOTIDE SEQUENCE [LARGE SCALE GENOMIC DNA]</scope>
    <source>
        <strain>ATCC BAA-871 / DC3000</strain>
    </source>
</reference>
<evidence type="ECO:0000250" key="1"/>
<evidence type="ECO:0000305" key="2"/>
<protein>
    <recommendedName>
        <fullName>Putative 4-hydroxy-4-methyl-2-oxoglutarate aldolase</fullName>
        <shortName>HMG aldolase</shortName>
        <ecNumber>4.1.3.17</ecNumber>
    </recommendedName>
    <alternativeName>
        <fullName>Oxaloacetate decarboxylase</fullName>
        <shortName>OAA decarboxylase</shortName>
        <ecNumber>4.1.1.112</ecNumber>
    </alternativeName>
    <alternativeName>
        <fullName>Regulator of ribonuclease activity homolog</fullName>
    </alternativeName>
    <alternativeName>
        <fullName>RraA-like protein</fullName>
    </alternativeName>
</protein>
<name>RRAAH_PSESM</name>
<keyword id="KW-0456">Lyase</keyword>
<keyword id="KW-0479">Metal-binding</keyword>
<keyword id="KW-1185">Reference proteome</keyword>
<comment type="function">
    <text evidence="1">Catalyzes the aldol cleavage of 4-hydroxy-4-methyl-2-oxoglutarate (HMG) into 2 molecules of pyruvate. Also contains a secondary oxaloacetate (OAA) decarboxylase activity due to the common pyruvate enolate transition state formed following C-C bond cleavage in the retro-aldol and decarboxylation reactions (By similarity).</text>
</comment>
<comment type="catalytic activity">
    <reaction>
        <text>4-hydroxy-4-methyl-2-oxoglutarate = 2 pyruvate</text>
        <dbReference type="Rhea" id="RHEA:22748"/>
        <dbReference type="ChEBI" id="CHEBI:15361"/>
        <dbReference type="ChEBI" id="CHEBI:58276"/>
        <dbReference type="EC" id="4.1.3.17"/>
    </reaction>
</comment>
<comment type="catalytic activity">
    <reaction>
        <text>oxaloacetate + H(+) = pyruvate + CO2</text>
        <dbReference type="Rhea" id="RHEA:15641"/>
        <dbReference type="ChEBI" id="CHEBI:15361"/>
        <dbReference type="ChEBI" id="CHEBI:15378"/>
        <dbReference type="ChEBI" id="CHEBI:16452"/>
        <dbReference type="ChEBI" id="CHEBI:16526"/>
        <dbReference type="EC" id="4.1.1.112"/>
    </reaction>
</comment>
<comment type="cofactor">
    <cofactor evidence="1">
        <name>a divalent metal cation</name>
        <dbReference type="ChEBI" id="CHEBI:60240"/>
    </cofactor>
    <text evidence="1">Divalent metal cation.</text>
</comment>
<comment type="subunit">
    <text evidence="1">Homotrimer.</text>
</comment>
<comment type="similarity">
    <text evidence="2">Belongs to the class II aldolase/RraA-like family.</text>
</comment>
<accession>Q883Q6</accession>
<proteinExistence type="inferred from homology"/>
<sequence length="162" mass="17481">MHYITPDLCDAYPELVQVVEPMLSNFGGRDSFGGQIVTLKCFEDNSLVKEQVELDGKGKVLVVDGGGSLRCALLGDMLAEKAAKHGWEGLVIYGCVRDVDMLAQTDLGVQALASYPKRSEKRGVGQLDLPVTFGGVTFRPGEYLYADNNGVIISPSPLTMPE</sequence>